<dbReference type="EC" id="3.6.5.2" evidence="2"/>
<dbReference type="EMBL" id="AK039013">
    <property type="protein sequence ID" value="BAC30206.1"/>
    <property type="molecule type" value="mRNA"/>
</dbReference>
<dbReference type="EMBL" id="AK048981">
    <property type="protein sequence ID" value="BAC33503.1"/>
    <property type="molecule type" value="mRNA"/>
</dbReference>
<dbReference type="EMBL" id="AK160737">
    <property type="protein sequence ID" value="BAE35978.1"/>
    <property type="molecule type" value="mRNA"/>
</dbReference>
<dbReference type="EMBL" id="BC050853">
    <property type="protein sequence ID" value="AAH50853.1"/>
    <property type="molecule type" value="mRNA"/>
</dbReference>
<dbReference type="EMBL" id="BC052472">
    <property type="protein sequence ID" value="AAH52472.1"/>
    <property type="molecule type" value="mRNA"/>
</dbReference>
<dbReference type="CCDS" id="CCDS30242.1"/>
<dbReference type="RefSeq" id="NP_780331.1">
    <property type="nucleotide sequence ID" value="NM_175122.6"/>
</dbReference>
<dbReference type="SMR" id="Q8BHC1"/>
<dbReference type="BioGRID" id="212444">
    <property type="interactions" value="4"/>
</dbReference>
<dbReference type="FunCoup" id="Q8BHC1">
    <property type="interactions" value="1243"/>
</dbReference>
<dbReference type="IntAct" id="Q8BHC1">
    <property type="interactions" value="47"/>
</dbReference>
<dbReference type="MINT" id="Q8BHC1"/>
<dbReference type="STRING" id="10090.ENSMUSP00000033545"/>
<dbReference type="GlyGen" id="Q8BHC1">
    <property type="glycosylation" value="1 site, 1 O-linked glycan (1 site)"/>
</dbReference>
<dbReference type="iPTMnet" id="Q8BHC1"/>
<dbReference type="PhosphoSitePlus" id="Q8BHC1"/>
<dbReference type="SwissPalm" id="Q8BHC1"/>
<dbReference type="jPOST" id="Q8BHC1"/>
<dbReference type="PaxDb" id="10090-ENSMUSP00000033545"/>
<dbReference type="ProteomicsDB" id="300357"/>
<dbReference type="Pumba" id="Q8BHC1"/>
<dbReference type="Antibodypedia" id="350">
    <property type="antibodies" value="188 antibodies from 28 providers"/>
</dbReference>
<dbReference type="DNASU" id="67790"/>
<dbReference type="Ensembl" id="ENSMUST00000033545.6">
    <property type="protein sequence ID" value="ENSMUSP00000033545.6"/>
    <property type="gene ID" value="ENSMUSG00000031202.6"/>
</dbReference>
<dbReference type="GeneID" id="67790"/>
<dbReference type="KEGG" id="mmu:67790"/>
<dbReference type="UCSC" id="uc009tqe.2">
    <property type="organism name" value="mouse"/>
</dbReference>
<dbReference type="AGR" id="MGI:1915040"/>
<dbReference type="CTD" id="116442"/>
<dbReference type="MGI" id="MGI:1915040">
    <property type="gene designation" value="Rab39b"/>
</dbReference>
<dbReference type="VEuPathDB" id="HostDB:ENSMUSG00000031202"/>
<dbReference type="eggNOG" id="KOG0091">
    <property type="taxonomic scope" value="Eukaryota"/>
</dbReference>
<dbReference type="GeneTree" id="ENSGT00940000158132"/>
<dbReference type="HOGENOM" id="CLU_041217_23_1_1"/>
<dbReference type="InParanoid" id="Q8BHC1"/>
<dbReference type="OMA" id="XSITRAY"/>
<dbReference type="OrthoDB" id="9989112at2759"/>
<dbReference type="PhylomeDB" id="Q8BHC1"/>
<dbReference type="TreeFam" id="TF300032"/>
<dbReference type="Reactome" id="R-MMU-8873719">
    <property type="pathway name" value="RAB geranylgeranylation"/>
</dbReference>
<dbReference type="Reactome" id="R-MMU-8876198">
    <property type="pathway name" value="RAB GEFs exchange GTP for GDP on RABs"/>
</dbReference>
<dbReference type="BioGRID-ORCS" id="67790">
    <property type="hits" value="3 hits in 78 CRISPR screens"/>
</dbReference>
<dbReference type="PRO" id="PR:Q8BHC1"/>
<dbReference type="Proteomes" id="UP000000589">
    <property type="component" value="Chromosome X"/>
</dbReference>
<dbReference type="RNAct" id="Q8BHC1">
    <property type="molecule type" value="protein"/>
</dbReference>
<dbReference type="Bgee" id="ENSMUSG00000031202">
    <property type="expression patterns" value="Expressed in supraoptic nucleus and 164 other cell types or tissues"/>
</dbReference>
<dbReference type="ExpressionAtlas" id="Q8BHC1">
    <property type="expression patterns" value="baseline and differential"/>
</dbReference>
<dbReference type="GO" id="GO:0030659">
    <property type="term" value="C:cytoplasmic vesicle membrane"/>
    <property type="evidence" value="ECO:0007669"/>
    <property type="project" value="UniProtKB-SubCell"/>
</dbReference>
<dbReference type="GO" id="GO:0005794">
    <property type="term" value="C:Golgi apparatus"/>
    <property type="evidence" value="ECO:0000314"/>
    <property type="project" value="UniProtKB"/>
</dbReference>
<dbReference type="GO" id="GO:0043005">
    <property type="term" value="C:neuron projection"/>
    <property type="evidence" value="ECO:0007669"/>
    <property type="project" value="Ensembl"/>
</dbReference>
<dbReference type="GO" id="GO:0005886">
    <property type="term" value="C:plasma membrane"/>
    <property type="evidence" value="ECO:0007669"/>
    <property type="project" value="UniProtKB-SubCell"/>
</dbReference>
<dbReference type="GO" id="GO:0003925">
    <property type="term" value="F:G protein activity"/>
    <property type="evidence" value="ECO:0000315"/>
    <property type="project" value="UniProtKB"/>
</dbReference>
<dbReference type="GO" id="GO:0005525">
    <property type="term" value="F:GTP binding"/>
    <property type="evidence" value="ECO:0007669"/>
    <property type="project" value="UniProtKB-KW"/>
</dbReference>
<dbReference type="GO" id="GO:0031489">
    <property type="term" value="F:myosin V binding"/>
    <property type="evidence" value="ECO:0007669"/>
    <property type="project" value="Ensembl"/>
</dbReference>
<dbReference type="GO" id="GO:0006914">
    <property type="term" value="P:autophagy"/>
    <property type="evidence" value="ECO:0007669"/>
    <property type="project" value="UniProtKB-KW"/>
</dbReference>
<dbReference type="GO" id="GO:0015031">
    <property type="term" value="P:protein transport"/>
    <property type="evidence" value="ECO:0007669"/>
    <property type="project" value="UniProtKB-KW"/>
</dbReference>
<dbReference type="GO" id="GO:0032482">
    <property type="term" value="P:Rab protein signal transduction"/>
    <property type="evidence" value="ECO:0007669"/>
    <property type="project" value="InterPro"/>
</dbReference>
<dbReference type="GO" id="GO:0010506">
    <property type="term" value="P:regulation of autophagy"/>
    <property type="evidence" value="ECO:0000250"/>
    <property type="project" value="UniProtKB"/>
</dbReference>
<dbReference type="GO" id="GO:0050808">
    <property type="term" value="P:synapse organization"/>
    <property type="evidence" value="ECO:0000315"/>
    <property type="project" value="UniProtKB"/>
</dbReference>
<dbReference type="GO" id="GO:0016192">
    <property type="term" value="P:vesicle-mediated transport"/>
    <property type="evidence" value="ECO:0000315"/>
    <property type="project" value="UniProtKB"/>
</dbReference>
<dbReference type="CDD" id="cd04111">
    <property type="entry name" value="Rab39"/>
    <property type="match status" value="1"/>
</dbReference>
<dbReference type="FunFam" id="3.40.50.300:FF:000358">
    <property type="entry name" value="RAB39B, member RAS oncogene family"/>
    <property type="match status" value="1"/>
</dbReference>
<dbReference type="Gene3D" id="3.40.50.300">
    <property type="entry name" value="P-loop containing nucleotide triphosphate hydrolases"/>
    <property type="match status" value="1"/>
</dbReference>
<dbReference type="InterPro" id="IPR027417">
    <property type="entry name" value="P-loop_NTPase"/>
</dbReference>
<dbReference type="InterPro" id="IPR041818">
    <property type="entry name" value="Rab39"/>
</dbReference>
<dbReference type="InterPro" id="IPR050209">
    <property type="entry name" value="Rab_GTPases_membrane_traffic"/>
</dbReference>
<dbReference type="InterPro" id="IPR005225">
    <property type="entry name" value="Small_GTP-bd"/>
</dbReference>
<dbReference type="InterPro" id="IPR001806">
    <property type="entry name" value="Small_GTPase"/>
</dbReference>
<dbReference type="NCBIfam" id="TIGR00231">
    <property type="entry name" value="small_GTP"/>
    <property type="match status" value="1"/>
</dbReference>
<dbReference type="PANTHER" id="PTHR47979">
    <property type="entry name" value="DRAB11-RELATED"/>
    <property type="match status" value="1"/>
</dbReference>
<dbReference type="Pfam" id="PF00071">
    <property type="entry name" value="Ras"/>
    <property type="match status" value="1"/>
</dbReference>
<dbReference type="PRINTS" id="PR00449">
    <property type="entry name" value="RASTRNSFRMNG"/>
</dbReference>
<dbReference type="SMART" id="SM00175">
    <property type="entry name" value="RAB"/>
    <property type="match status" value="1"/>
</dbReference>
<dbReference type="SMART" id="SM00176">
    <property type="entry name" value="RAN"/>
    <property type="match status" value="1"/>
</dbReference>
<dbReference type="SMART" id="SM00173">
    <property type="entry name" value="RAS"/>
    <property type="match status" value="1"/>
</dbReference>
<dbReference type="SMART" id="SM00174">
    <property type="entry name" value="RHO"/>
    <property type="match status" value="1"/>
</dbReference>
<dbReference type="SUPFAM" id="SSF52540">
    <property type="entry name" value="P-loop containing nucleoside triphosphate hydrolases"/>
    <property type="match status" value="1"/>
</dbReference>
<dbReference type="PROSITE" id="PS51419">
    <property type="entry name" value="RAB"/>
    <property type="match status" value="1"/>
</dbReference>
<sequence>MEAIWLYQFRLIVIGDSTVGKSCLIRRFTEGRFAQVSDPTVGVDFFSRLVEIEPGKRIKLQIWDTAGQERFRSITRAYYRNSVGGLLLFDITNRRSFQNVHEWLEETKVHVQPYQIVFVLVGHKCDLDTQRQVTRHEAEKLAAAYGMKYIETSARDAINVEKAFTDLTRDIYELVKRGEITIQEGWEGVKSGFVPNVVHSSEEVIKSERRCLC</sequence>
<proteinExistence type="evidence at protein level"/>
<organism>
    <name type="scientific">Mus musculus</name>
    <name type="common">Mouse</name>
    <dbReference type="NCBI Taxonomy" id="10090"/>
    <lineage>
        <taxon>Eukaryota</taxon>
        <taxon>Metazoa</taxon>
        <taxon>Chordata</taxon>
        <taxon>Craniata</taxon>
        <taxon>Vertebrata</taxon>
        <taxon>Euteleostomi</taxon>
        <taxon>Mammalia</taxon>
        <taxon>Eutheria</taxon>
        <taxon>Euarchontoglires</taxon>
        <taxon>Glires</taxon>
        <taxon>Rodentia</taxon>
        <taxon>Myomorpha</taxon>
        <taxon>Muroidea</taxon>
        <taxon>Muridae</taxon>
        <taxon>Murinae</taxon>
        <taxon>Mus</taxon>
        <taxon>Mus</taxon>
    </lineage>
</organism>
<gene>
    <name evidence="11" type="primary">Rab39b</name>
</gene>
<keyword id="KW-0072">Autophagy</keyword>
<keyword id="KW-1003">Cell membrane</keyword>
<keyword id="KW-0968">Cytoplasmic vesicle</keyword>
<keyword id="KW-0333">Golgi apparatus</keyword>
<keyword id="KW-0342">GTP-binding</keyword>
<keyword id="KW-0378">Hydrolase</keyword>
<keyword id="KW-0449">Lipoprotein</keyword>
<keyword id="KW-0458">Lysosome</keyword>
<keyword id="KW-0460">Magnesium</keyword>
<keyword id="KW-0472">Membrane</keyword>
<keyword id="KW-0479">Metal-binding</keyword>
<keyword id="KW-0488">Methylation</keyword>
<keyword id="KW-0547">Nucleotide-binding</keyword>
<keyword id="KW-0597">Phosphoprotein</keyword>
<keyword id="KW-0636">Prenylation</keyword>
<keyword id="KW-0653">Protein transport</keyword>
<keyword id="KW-1185">Reference proteome</keyword>
<keyword id="KW-0813">Transport</keyword>
<feature type="chain" id="PRO_0000121256" description="Ras-related protein Rab-39B">
    <location>
        <begin position="1"/>
        <end position="213"/>
    </location>
</feature>
<feature type="region of interest" description="Switch-I" evidence="4">
    <location>
        <begin position="35"/>
        <end position="43"/>
    </location>
</feature>
<feature type="region of interest" description="Switch-II" evidence="4">
    <location>
        <begin position="67"/>
        <end position="83"/>
    </location>
</feature>
<feature type="binding site" evidence="3">
    <location>
        <position position="17"/>
    </location>
    <ligand>
        <name>GTP</name>
        <dbReference type="ChEBI" id="CHEBI:37565"/>
    </ligand>
</feature>
<feature type="binding site" evidence="3">
    <location>
        <position position="20"/>
    </location>
    <ligand>
        <name>GTP</name>
        <dbReference type="ChEBI" id="CHEBI:37565"/>
    </ligand>
</feature>
<feature type="binding site" evidence="3">
    <location>
        <position position="21"/>
    </location>
    <ligand>
        <name>GTP</name>
        <dbReference type="ChEBI" id="CHEBI:37565"/>
    </ligand>
</feature>
<feature type="binding site" evidence="3">
    <location>
        <position position="22"/>
    </location>
    <ligand>
        <name>GTP</name>
        <dbReference type="ChEBI" id="CHEBI:37565"/>
    </ligand>
</feature>
<feature type="binding site" evidence="3">
    <location>
        <position position="22"/>
    </location>
    <ligand>
        <name>Mg(2+)</name>
        <dbReference type="ChEBI" id="CHEBI:18420"/>
    </ligand>
</feature>
<feature type="binding site" evidence="3">
    <location>
        <position position="23"/>
    </location>
    <ligand>
        <name>GTP</name>
        <dbReference type="ChEBI" id="CHEBI:37565"/>
    </ligand>
</feature>
<feature type="binding site" evidence="3">
    <location>
        <position position="37"/>
    </location>
    <ligand>
        <name>GTP</name>
        <dbReference type="ChEBI" id="CHEBI:37565"/>
    </ligand>
</feature>
<feature type="binding site" evidence="3">
    <location>
        <position position="40"/>
    </location>
    <ligand>
        <name>GTP</name>
        <dbReference type="ChEBI" id="CHEBI:37565"/>
    </ligand>
</feature>
<feature type="binding site" evidence="3">
    <location>
        <position position="40"/>
    </location>
    <ligand>
        <name>Mg(2+)</name>
        <dbReference type="ChEBI" id="CHEBI:18420"/>
    </ligand>
</feature>
<feature type="binding site" evidence="2 3">
    <location>
        <position position="64"/>
    </location>
    <ligand>
        <name>Mg(2+)</name>
        <dbReference type="ChEBI" id="CHEBI:18420"/>
    </ligand>
</feature>
<feature type="binding site" evidence="3">
    <location>
        <position position="67"/>
    </location>
    <ligand>
        <name>GTP</name>
        <dbReference type="ChEBI" id="CHEBI:37565"/>
    </ligand>
</feature>
<feature type="binding site" evidence="3">
    <location>
        <position position="123"/>
    </location>
    <ligand>
        <name>GTP</name>
        <dbReference type="ChEBI" id="CHEBI:37565"/>
    </ligand>
</feature>
<feature type="binding site" evidence="3">
    <location>
        <position position="124"/>
    </location>
    <ligand>
        <name>GTP</name>
        <dbReference type="ChEBI" id="CHEBI:37565"/>
    </ligand>
</feature>
<feature type="binding site" evidence="3">
    <location>
        <position position="126"/>
    </location>
    <ligand>
        <name>GTP</name>
        <dbReference type="ChEBI" id="CHEBI:37565"/>
    </ligand>
</feature>
<feature type="binding site" evidence="3">
    <location>
        <position position="154"/>
    </location>
    <ligand>
        <name>GTP</name>
        <dbReference type="ChEBI" id="CHEBI:37565"/>
    </ligand>
</feature>
<feature type="binding site" evidence="3">
    <location>
        <position position="155"/>
    </location>
    <ligand>
        <name>GTP</name>
        <dbReference type="ChEBI" id="CHEBI:37565"/>
    </ligand>
</feature>
<feature type="modified residue" description="Phosphoserine" evidence="12">
    <location>
        <position position="201"/>
    </location>
</feature>
<feature type="modified residue" description="Cysteine methyl ester" evidence="1">
    <location>
        <position position="213"/>
    </location>
</feature>
<feature type="lipid moiety-binding region" description="S-geranylgeranyl cysteine" evidence="1">
    <location>
        <position position="211"/>
    </location>
</feature>
<feature type="lipid moiety-binding region" description="S-geranylgeranyl cysteine" evidence="1">
    <location>
        <position position="213"/>
    </location>
</feature>
<comment type="function">
    <text evidence="3 5 7 8">The small GTPases Rab are key regulators of intracellular membrane trafficking, from the formation of transport vesicles to their fusion with membranes. Rabs cycle between an inactive GDP-bound form and an active GTP-bound form that is able to recruit to membranes different sets of downstream effectors directly responsible for vesicle formation, movement, tethering and fusion (PubMed:20159109, PubMed:25784538). RAB39B is involved in autophagy and may function in autophagosome formation (By similarity). Binds downstream effector PICK1 to ensure selectively GRIA2 exit from the endoplasmic reticulum to the Golgi and to regulate AMPAR composition at the post-synapses and thus synaptic transmission (PubMed:25784538). May regulate the homeostasis of SNCA/alpha-synuclein (PubMed:25434005).</text>
</comment>
<comment type="catalytic activity">
    <reaction evidence="2">
        <text>GTP + H2O = GDP + phosphate + H(+)</text>
        <dbReference type="Rhea" id="RHEA:19669"/>
        <dbReference type="ChEBI" id="CHEBI:15377"/>
        <dbReference type="ChEBI" id="CHEBI:15378"/>
        <dbReference type="ChEBI" id="CHEBI:37565"/>
        <dbReference type="ChEBI" id="CHEBI:43474"/>
        <dbReference type="ChEBI" id="CHEBI:58189"/>
        <dbReference type="EC" id="3.6.5.2"/>
    </reaction>
    <physiologicalReaction direction="left-to-right" evidence="2">
        <dbReference type="Rhea" id="RHEA:19670"/>
    </physiologicalReaction>
</comment>
<comment type="cofactor">
    <cofactor evidence="3">
        <name>Mg(2+)</name>
        <dbReference type="ChEBI" id="CHEBI:18420"/>
    </cofactor>
</comment>
<comment type="activity regulation">
    <text evidence="3 10">Regulated by guanine nucleotide exchange factors (GEFs) including C9orf72-SMCR8 complex, which promote the exchange of bound GDP for free GTP (By similarity). Regulated by GTPase activating proteins (GAPs) which increase the GTP hydrolysis activity (Probable). Inhibited by GDP dissociation inhibitors (GDIs) (Probable).</text>
</comment>
<comment type="subunit">
    <text evidence="3 6 8 9">Interacts (GDP-bound) with C9orf72; C9orf72 in complex with SMCR8 acts as a GEF for RAB39B (By similarity). Interacts (in GTP-bound form) with PICK1 (via PDZ domain); a PICK1 homodimer may allow simultaneous association of RAB39B and GRIA2 to PICK1 which is involved in GRIA2 trafficking (PubMed:25784538). Interacts with isoform c of RASSF1; the interaction is strong (PubMed:23294242). Interacts with isoform a of RASSF1; the interaction is weak (PubMed:23294242). Interacts with the DLG4/PSD-95 (PubMed:31651360). Interacts (GTP-bound) with HOPS complex components VPS39 and VPS41 (By similarity).</text>
</comment>
<comment type="interaction">
    <interactant intactId="EBI-10767682">
        <id>Q8BHC1</id>
    </interactant>
    <interactant intactId="EBI-10767725">
        <id>Q8CGB3-3</id>
        <label>Uaca</label>
    </interactant>
    <organismsDiffer>false</organismsDiffer>
    <experiments>4</experiments>
</comment>
<comment type="subcellular location">
    <subcellularLocation>
        <location evidence="3">Cell membrane</location>
        <topology evidence="3">Lipid-anchor</topology>
        <orientation evidence="3">Cytoplasmic side</orientation>
    </subcellularLocation>
    <subcellularLocation>
        <location evidence="3">Cytoplasmic vesicle membrane</location>
        <topology evidence="3">Lipid-anchor</topology>
        <orientation evidence="3">Cytoplasmic side</orientation>
    </subcellularLocation>
    <subcellularLocation>
        <location evidence="5">Golgi apparatus</location>
    </subcellularLocation>
    <subcellularLocation>
        <location evidence="3">Cytoplasmic vesicle</location>
        <location evidence="3">Autophagosome membrane</location>
    </subcellularLocation>
    <subcellularLocation>
        <location evidence="3">Autolysosome membrane</location>
    </subcellularLocation>
    <text evidence="3 5">Partial colocalization with markers that cycle from the cell surface to the trans-Golgi network. Colocalized with STX17 in autolysosomes in autophagy-induced conditions, although less compared with RAB39A (By similarity).</text>
</comment>
<comment type="tissue specificity">
    <text evidence="5">Specifically expressed in neuron and neuronal precursors in the brain. Expression is high in all regions of the brain with highest levels observed in the hippocampus.</text>
</comment>
<comment type="domain">
    <text evidence="3">Switch I, switch II and the interswitch regions are characteristic of Rab GTPases and mediate the interactions with Rab downstream effectors. The switch regions undergo conformational changes upon nucleotide binding which drive interaction with specific sets of effector proteins, with most effectors only binding to GTP-bound Rab.</text>
</comment>
<comment type="similarity">
    <text evidence="10">Belongs to the small GTPase superfamily. Rab family.</text>
</comment>
<reference key="1">
    <citation type="journal article" date="2005" name="Science">
        <title>The transcriptional landscape of the mammalian genome.</title>
        <authorList>
            <person name="Carninci P."/>
            <person name="Kasukawa T."/>
            <person name="Katayama S."/>
            <person name="Gough J."/>
            <person name="Frith M.C."/>
            <person name="Maeda N."/>
            <person name="Oyama R."/>
            <person name="Ravasi T."/>
            <person name="Lenhard B."/>
            <person name="Wells C."/>
            <person name="Kodzius R."/>
            <person name="Shimokawa K."/>
            <person name="Bajic V.B."/>
            <person name="Brenner S.E."/>
            <person name="Batalov S."/>
            <person name="Forrest A.R."/>
            <person name="Zavolan M."/>
            <person name="Davis M.J."/>
            <person name="Wilming L.G."/>
            <person name="Aidinis V."/>
            <person name="Allen J.E."/>
            <person name="Ambesi-Impiombato A."/>
            <person name="Apweiler R."/>
            <person name="Aturaliya R.N."/>
            <person name="Bailey T.L."/>
            <person name="Bansal M."/>
            <person name="Baxter L."/>
            <person name="Beisel K.W."/>
            <person name="Bersano T."/>
            <person name="Bono H."/>
            <person name="Chalk A.M."/>
            <person name="Chiu K.P."/>
            <person name="Choudhary V."/>
            <person name="Christoffels A."/>
            <person name="Clutterbuck D.R."/>
            <person name="Crowe M.L."/>
            <person name="Dalla E."/>
            <person name="Dalrymple B.P."/>
            <person name="de Bono B."/>
            <person name="Della Gatta G."/>
            <person name="di Bernardo D."/>
            <person name="Down T."/>
            <person name="Engstrom P."/>
            <person name="Fagiolini M."/>
            <person name="Faulkner G."/>
            <person name="Fletcher C.F."/>
            <person name="Fukushima T."/>
            <person name="Furuno M."/>
            <person name="Futaki S."/>
            <person name="Gariboldi M."/>
            <person name="Georgii-Hemming P."/>
            <person name="Gingeras T.R."/>
            <person name="Gojobori T."/>
            <person name="Green R.E."/>
            <person name="Gustincich S."/>
            <person name="Harbers M."/>
            <person name="Hayashi Y."/>
            <person name="Hensch T.K."/>
            <person name="Hirokawa N."/>
            <person name="Hill D."/>
            <person name="Huminiecki L."/>
            <person name="Iacono M."/>
            <person name="Ikeo K."/>
            <person name="Iwama A."/>
            <person name="Ishikawa T."/>
            <person name="Jakt M."/>
            <person name="Kanapin A."/>
            <person name="Katoh M."/>
            <person name="Kawasawa Y."/>
            <person name="Kelso J."/>
            <person name="Kitamura H."/>
            <person name="Kitano H."/>
            <person name="Kollias G."/>
            <person name="Krishnan S.P."/>
            <person name="Kruger A."/>
            <person name="Kummerfeld S.K."/>
            <person name="Kurochkin I.V."/>
            <person name="Lareau L.F."/>
            <person name="Lazarevic D."/>
            <person name="Lipovich L."/>
            <person name="Liu J."/>
            <person name="Liuni S."/>
            <person name="McWilliam S."/>
            <person name="Madan Babu M."/>
            <person name="Madera M."/>
            <person name="Marchionni L."/>
            <person name="Matsuda H."/>
            <person name="Matsuzawa S."/>
            <person name="Miki H."/>
            <person name="Mignone F."/>
            <person name="Miyake S."/>
            <person name="Morris K."/>
            <person name="Mottagui-Tabar S."/>
            <person name="Mulder N."/>
            <person name="Nakano N."/>
            <person name="Nakauchi H."/>
            <person name="Ng P."/>
            <person name="Nilsson R."/>
            <person name="Nishiguchi S."/>
            <person name="Nishikawa S."/>
            <person name="Nori F."/>
            <person name="Ohara O."/>
            <person name="Okazaki Y."/>
            <person name="Orlando V."/>
            <person name="Pang K.C."/>
            <person name="Pavan W.J."/>
            <person name="Pavesi G."/>
            <person name="Pesole G."/>
            <person name="Petrovsky N."/>
            <person name="Piazza S."/>
            <person name="Reed J."/>
            <person name="Reid J.F."/>
            <person name="Ring B.Z."/>
            <person name="Ringwald M."/>
            <person name="Rost B."/>
            <person name="Ruan Y."/>
            <person name="Salzberg S.L."/>
            <person name="Sandelin A."/>
            <person name="Schneider C."/>
            <person name="Schoenbach C."/>
            <person name="Sekiguchi K."/>
            <person name="Semple C.A."/>
            <person name="Seno S."/>
            <person name="Sessa L."/>
            <person name="Sheng Y."/>
            <person name="Shibata Y."/>
            <person name="Shimada H."/>
            <person name="Shimada K."/>
            <person name="Silva D."/>
            <person name="Sinclair B."/>
            <person name="Sperling S."/>
            <person name="Stupka E."/>
            <person name="Sugiura K."/>
            <person name="Sultana R."/>
            <person name="Takenaka Y."/>
            <person name="Taki K."/>
            <person name="Tammoja K."/>
            <person name="Tan S.L."/>
            <person name="Tang S."/>
            <person name="Taylor M.S."/>
            <person name="Tegner J."/>
            <person name="Teichmann S.A."/>
            <person name="Ueda H.R."/>
            <person name="van Nimwegen E."/>
            <person name="Verardo R."/>
            <person name="Wei C.L."/>
            <person name="Yagi K."/>
            <person name="Yamanishi H."/>
            <person name="Zabarovsky E."/>
            <person name="Zhu S."/>
            <person name="Zimmer A."/>
            <person name="Hide W."/>
            <person name="Bult C."/>
            <person name="Grimmond S.M."/>
            <person name="Teasdale R.D."/>
            <person name="Liu E.T."/>
            <person name="Brusic V."/>
            <person name="Quackenbush J."/>
            <person name="Wahlestedt C."/>
            <person name="Mattick J.S."/>
            <person name="Hume D.A."/>
            <person name="Kai C."/>
            <person name="Sasaki D."/>
            <person name="Tomaru Y."/>
            <person name="Fukuda S."/>
            <person name="Kanamori-Katayama M."/>
            <person name="Suzuki M."/>
            <person name="Aoki J."/>
            <person name="Arakawa T."/>
            <person name="Iida J."/>
            <person name="Imamura K."/>
            <person name="Itoh M."/>
            <person name="Kato T."/>
            <person name="Kawaji H."/>
            <person name="Kawagashira N."/>
            <person name="Kawashima T."/>
            <person name="Kojima M."/>
            <person name="Kondo S."/>
            <person name="Konno H."/>
            <person name="Nakano K."/>
            <person name="Ninomiya N."/>
            <person name="Nishio T."/>
            <person name="Okada M."/>
            <person name="Plessy C."/>
            <person name="Shibata K."/>
            <person name="Shiraki T."/>
            <person name="Suzuki S."/>
            <person name="Tagami M."/>
            <person name="Waki K."/>
            <person name="Watahiki A."/>
            <person name="Okamura-Oho Y."/>
            <person name="Suzuki H."/>
            <person name="Kawai J."/>
            <person name="Hayashizaki Y."/>
        </authorList>
    </citation>
    <scope>NUCLEOTIDE SEQUENCE [LARGE SCALE MRNA]</scope>
    <source>
        <strain>C57BL/6J</strain>
        <tissue>Cerebellum</tissue>
        <tissue>Head</tissue>
        <tissue>Hypothalamus</tissue>
    </source>
</reference>
<reference key="2">
    <citation type="journal article" date="2004" name="Genome Res.">
        <title>The status, quality, and expansion of the NIH full-length cDNA project: the Mammalian Gene Collection (MGC).</title>
        <authorList>
            <consortium name="The MGC Project Team"/>
        </authorList>
    </citation>
    <scope>NUCLEOTIDE SEQUENCE [LARGE SCALE MRNA]</scope>
    <source>
        <strain>C57BL/6J</strain>
        <tissue>Brain</tissue>
        <tissue>Limb</tissue>
    </source>
</reference>
<reference key="3">
    <citation type="journal article" date="2010" name="Am. J. Hum. Genet.">
        <title>Mutations in the small GTPase gene RAB39B are responsible for X-linked mental retardation associated with autism, epilepsy, and macrocephaly.</title>
        <authorList>
            <person name="Giannandrea M."/>
            <person name="Bianchi V."/>
            <person name="Mignogna M.L."/>
            <person name="Sirri A."/>
            <person name="Carrabino S."/>
            <person name="D'Elia E."/>
            <person name="Vecellio M."/>
            <person name="Russo S."/>
            <person name="Cogliati F."/>
            <person name="Larizza L."/>
            <person name="Ropers H.H."/>
            <person name="Tzschach A."/>
            <person name="Kalscheuer V."/>
            <person name="Oehl-Jaschkowitz B."/>
            <person name="Skinner C."/>
            <person name="Schwartz C.E."/>
            <person name="Gecz J."/>
            <person name="Van Esch H."/>
            <person name="Raynaud M."/>
            <person name="Chelly J."/>
            <person name="de Brouwer A.P."/>
            <person name="Toniolo D."/>
            <person name="D'Adamo P."/>
        </authorList>
    </citation>
    <scope>FUNCTION</scope>
    <scope>SUBCELLULAR LOCATION</scope>
    <scope>TISSUE SPECIFICITY</scope>
</reference>
<reference key="4">
    <citation type="journal article" date="2010" name="Cell">
        <title>A tissue-specific atlas of mouse protein phosphorylation and expression.</title>
        <authorList>
            <person name="Huttlin E.L."/>
            <person name="Jedrychowski M.P."/>
            <person name="Elias J.E."/>
            <person name="Goswami T."/>
            <person name="Rad R."/>
            <person name="Beausoleil S.A."/>
            <person name="Villen J."/>
            <person name="Haas W."/>
            <person name="Sowa M.E."/>
            <person name="Gygi S.P."/>
        </authorList>
    </citation>
    <scope>PHOSPHORYLATION [LARGE SCALE ANALYSIS] AT SER-201</scope>
    <scope>IDENTIFICATION BY MASS SPECTROMETRY [LARGE SCALE ANALYSIS]</scope>
    <source>
        <tissue>Brain</tissue>
        <tissue>Pancreas</tissue>
    </source>
</reference>
<reference key="5">
    <citation type="journal article" date="2013" name="Biochem. Biophys. Res. Commun.">
        <title>Small GTPase Rab39A interacts with UACA and regulates the retinoic acid-induced neurite morphology of Neuro2A cells.</title>
        <authorList>
            <person name="Mori Y."/>
            <person name="Matsui T."/>
            <person name="Omote D."/>
            <person name="Fukuda M."/>
        </authorList>
    </citation>
    <scope>INTERACTION WITH UACA</scope>
</reference>
<reference key="6">
    <citation type="journal article" date="2013" name="Genes Cells">
        <title>C. elegans Rassf homolog, rasf-1, is functionally associated with rab-39 Rab GTPase in oxidative stress response.</title>
        <authorList>
            <person name="Takenaka M."/>
            <person name="Inoue H."/>
            <person name="Takeshima A."/>
            <person name="Kakura T."/>
            <person name="Hori T."/>
        </authorList>
    </citation>
    <scope>INTERACTION WITH RASSF1</scope>
</reference>
<reference key="7">
    <citation type="journal article" date="2014" name="Am. J. Hum. Genet.">
        <title>Mutations in RAB39B cause X-linked intellectual disability and early-onset Parkinson disease with alpha-synuclein pathology.</title>
        <authorList>
            <person name="Wilson G.R."/>
            <person name="Sim J.C."/>
            <person name="McLean C."/>
            <person name="Giannandrea M."/>
            <person name="Galea C.A."/>
            <person name="Riseley J.R."/>
            <person name="Stephenson S.E."/>
            <person name="Fitzpatrick E."/>
            <person name="Haas S.A."/>
            <person name="Pope K."/>
            <person name="Hogan K.J."/>
            <person name="Gregg R.G."/>
            <person name="Bromhead C.J."/>
            <person name="Wargowski D.S."/>
            <person name="Lawrence C.H."/>
            <person name="James P.A."/>
            <person name="Churchyard A."/>
            <person name="Gao Y."/>
            <person name="Phelan D.G."/>
            <person name="Gillies G."/>
            <person name="Salce N."/>
            <person name="Stanford L."/>
            <person name="Marsh A.P."/>
            <person name="Mignogna M.L."/>
            <person name="Hayflick S.J."/>
            <person name="Leventer R.J."/>
            <person name="Delatycki M.B."/>
            <person name="Mellick G.D."/>
            <person name="Kalscheuer V.M."/>
            <person name="D'Adamo P."/>
            <person name="Bahlo M."/>
            <person name="Amor D.J."/>
            <person name="Lockhart P.J."/>
        </authorList>
    </citation>
    <scope>FUNCTION</scope>
</reference>
<reference key="8">
    <citation type="journal article" date="2015" name="Nat. Commun.">
        <title>The intellectual disability protein RAB39B selectively regulates GluA2 trafficking to determine synaptic AMPAR composition.</title>
        <authorList>
            <person name="Mignogna M.L."/>
            <person name="Giannandrea M."/>
            <person name="Gurgone A."/>
            <person name="Fanelli F."/>
            <person name="Raimondi F."/>
            <person name="Mapelli L."/>
            <person name="Bassani S."/>
            <person name="Fang H."/>
            <person name="Van Anken E."/>
            <person name="Alessio M."/>
            <person name="Passafaro M."/>
            <person name="Gatti S."/>
            <person name="Esteban J.A."/>
            <person name="Huganir R."/>
            <person name="D'Adamo P."/>
        </authorList>
    </citation>
    <scope>FUNCTION</scope>
    <scope>INTERACTION WITH PICK1</scope>
</reference>
<reference key="9">
    <citation type="journal article" date="2019" name="Acta Neuropathol. Commun.">
        <title>Synaptic localization of C9orf72 regulates post-synaptic glutamate receptor 1 levels.</title>
        <authorList>
            <person name="Xiao S."/>
            <person name="McKeever P.M."/>
            <person name="Lau A."/>
            <person name="Robertson J."/>
        </authorList>
    </citation>
    <scope>INTERACTION WITH DLG4</scope>
</reference>
<name>RB39B_MOUSE</name>
<accession>Q8BHC1</accession>
<accession>Q3TUJ3</accession>
<protein>
    <recommendedName>
        <fullName>Ras-related protein Rab-39B</fullName>
        <ecNumber evidence="2">3.6.5.2</ecNumber>
    </recommendedName>
</protein>
<evidence type="ECO:0000250" key="1">
    <source>
        <dbReference type="UniProtKB" id="P20336"/>
    </source>
</evidence>
<evidence type="ECO:0000250" key="2">
    <source>
        <dbReference type="UniProtKB" id="P62820"/>
    </source>
</evidence>
<evidence type="ECO:0000250" key="3">
    <source>
        <dbReference type="UniProtKB" id="Q96DA2"/>
    </source>
</evidence>
<evidence type="ECO:0000255" key="4">
    <source>
        <dbReference type="PROSITE-ProRule" id="PRU00753"/>
    </source>
</evidence>
<evidence type="ECO:0000269" key="5">
    <source>
    </source>
</evidence>
<evidence type="ECO:0000269" key="6">
    <source>
    </source>
</evidence>
<evidence type="ECO:0000269" key="7">
    <source>
    </source>
</evidence>
<evidence type="ECO:0000269" key="8">
    <source>
    </source>
</evidence>
<evidence type="ECO:0000269" key="9">
    <source>
    </source>
</evidence>
<evidence type="ECO:0000305" key="10"/>
<evidence type="ECO:0000312" key="11">
    <source>
        <dbReference type="MGI" id="MGI:1915040"/>
    </source>
</evidence>
<evidence type="ECO:0007744" key="12">
    <source>
    </source>
</evidence>